<reference key="1">
    <citation type="journal article" date="2002" name="Nature">
        <title>Sequence and analysis of rice chromosome 4.</title>
        <authorList>
            <person name="Feng Q."/>
            <person name="Zhang Y."/>
            <person name="Hao P."/>
            <person name="Wang S."/>
            <person name="Fu G."/>
            <person name="Huang Y."/>
            <person name="Li Y."/>
            <person name="Zhu J."/>
            <person name="Liu Y."/>
            <person name="Hu X."/>
            <person name="Jia P."/>
            <person name="Zhang Y."/>
            <person name="Zhao Q."/>
            <person name="Ying K."/>
            <person name="Yu S."/>
            <person name="Tang Y."/>
            <person name="Weng Q."/>
            <person name="Zhang L."/>
            <person name="Lu Y."/>
            <person name="Mu J."/>
            <person name="Lu Y."/>
            <person name="Zhang L.S."/>
            <person name="Yu Z."/>
            <person name="Fan D."/>
            <person name="Liu X."/>
            <person name="Lu T."/>
            <person name="Li C."/>
            <person name="Wu Y."/>
            <person name="Sun T."/>
            <person name="Lei H."/>
            <person name="Li T."/>
            <person name="Hu H."/>
            <person name="Guan J."/>
            <person name="Wu M."/>
            <person name="Zhang R."/>
            <person name="Zhou B."/>
            <person name="Chen Z."/>
            <person name="Chen L."/>
            <person name="Jin Z."/>
            <person name="Wang R."/>
            <person name="Yin H."/>
            <person name="Cai Z."/>
            <person name="Ren S."/>
            <person name="Lv G."/>
            <person name="Gu W."/>
            <person name="Zhu G."/>
            <person name="Tu Y."/>
            <person name="Jia J."/>
            <person name="Zhang Y."/>
            <person name="Chen J."/>
            <person name="Kang H."/>
            <person name="Chen X."/>
            <person name="Shao C."/>
            <person name="Sun Y."/>
            <person name="Hu Q."/>
            <person name="Zhang X."/>
            <person name="Zhang W."/>
            <person name="Wang L."/>
            <person name="Ding C."/>
            <person name="Sheng H."/>
            <person name="Gu J."/>
            <person name="Chen S."/>
            <person name="Ni L."/>
            <person name="Zhu F."/>
            <person name="Chen W."/>
            <person name="Lan L."/>
            <person name="Lai Y."/>
            <person name="Cheng Z."/>
            <person name="Gu M."/>
            <person name="Jiang J."/>
            <person name="Li J."/>
            <person name="Hong G."/>
            <person name="Xue Y."/>
            <person name="Han B."/>
        </authorList>
    </citation>
    <scope>NUCLEOTIDE SEQUENCE [LARGE SCALE GENOMIC DNA]</scope>
    <source>
        <strain>cv. Guang-Lu-Ai No.4</strain>
    </source>
</reference>
<reference key="2">
    <citation type="journal article" date="2005" name="PLoS Biol.">
        <title>The genomes of Oryza sativa: a history of duplications.</title>
        <authorList>
            <person name="Yu J."/>
            <person name="Wang J."/>
            <person name="Lin W."/>
            <person name="Li S."/>
            <person name="Li H."/>
            <person name="Zhou J."/>
            <person name="Ni P."/>
            <person name="Dong W."/>
            <person name="Hu S."/>
            <person name="Zeng C."/>
            <person name="Zhang J."/>
            <person name="Zhang Y."/>
            <person name="Li R."/>
            <person name="Xu Z."/>
            <person name="Li S."/>
            <person name="Li X."/>
            <person name="Zheng H."/>
            <person name="Cong L."/>
            <person name="Lin L."/>
            <person name="Yin J."/>
            <person name="Geng J."/>
            <person name="Li G."/>
            <person name="Shi J."/>
            <person name="Liu J."/>
            <person name="Lv H."/>
            <person name="Li J."/>
            <person name="Wang J."/>
            <person name="Deng Y."/>
            <person name="Ran L."/>
            <person name="Shi X."/>
            <person name="Wang X."/>
            <person name="Wu Q."/>
            <person name="Li C."/>
            <person name="Ren X."/>
            <person name="Wang J."/>
            <person name="Wang X."/>
            <person name="Li D."/>
            <person name="Liu D."/>
            <person name="Zhang X."/>
            <person name="Ji Z."/>
            <person name="Zhao W."/>
            <person name="Sun Y."/>
            <person name="Zhang Z."/>
            <person name="Bao J."/>
            <person name="Han Y."/>
            <person name="Dong L."/>
            <person name="Ji J."/>
            <person name="Chen P."/>
            <person name="Wu S."/>
            <person name="Liu J."/>
            <person name="Xiao Y."/>
            <person name="Bu D."/>
            <person name="Tan J."/>
            <person name="Yang L."/>
            <person name="Ye C."/>
            <person name="Zhang J."/>
            <person name="Xu J."/>
            <person name="Zhou Y."/>
            <person name="Yu Y."/>
            <person name="Zhang B."/>
            <person name="Zhuang S."/>
            <person name="Wei H."/>
            <person name="Liu B."/>
            <person name="Lei M."/>
            <person name="Yu H."/>
            <person name="Li Y."/>
            <person name="Xu H."/>
            <person name="Wei S."/>
            <person name="He X."/>
            <person name="Fang L."/>
            <person name="Zhang Z."/>
            <person name="Zhang Y."/>
            <person name="Huang X."/>
            <person name="Su Z."/>
            <person name="Tong W."/>
            <person name="Li J."/>
            <person name="Tong Z."/>
            <person name="Li S."/>
            <person name="Ye J."/>
            <person name="Wang L."/>
            <person name="Fang L."/>
            <person name="Lei T."/>
            <person name="Chen C.-S."/>
            <person name="Chen H.-C."/>
            <person name="Xu Z."/>
            <person name="Li H."/>
            <person name="Huang H."/>
            <person name="Zhang F."/>
            <person name="Xu H."/>
            <person name="Li N."/>
            <person name="Zhao C."/>
            <person name="Li S."/>
            <person name="Dong L."/>
            <person name="Huang Y."/>
            <person name="Li L."/>
            <person name="Xi Y."/>
            <person name="Qi Q."/>
            <person name="Li W."/>
            <person name="Zhang B."/>
            <person name="Hu W."/>
            <person name="Zhang Y."/>
            <person name="Tian X."/>
            <person name="Jiao Y."/>
            <person name="Liang X."/>
            <person name="Jin J."/>
            <person name="Gao L."/>
            <person name="Zheng W."/>
            <person name="Hao B."/>
            <person name="Liu S.-M."/>
            <person name="Wang W."/>
            <person name="Yuan L."/>
            <person name="Cao M."/>
            <person name="McDermott J."/>
            <person name="Samudrala R."/>
            <person name="Wang J."/>
            <person name="Wong G.K.-S."/>
            <person name="Yang H."/>
        </authorList>
    </citation>
    <scope>NUCLEOTIDE SEQUENCE [LARGE SCALE GENOMIC DNA]</scope>
    <source>
        <strain>cv. 93-11</strain>
    </source>
</reference>
<organism>
    <name type="scientific">Oryza sativa subsp. indica</name>
    <name type="common">Rice</name>
    <dbReference type="NCBI Taxonomy" id="39946"/>
    <lineage>
        <taxon>Eukaryota</taxon>
        <taxon>Viridiplantae</taxon>
        <taxon>Streptophyta</taxon>
        <taxon>Embryophyta</taxon>
        <taxon>Tracheophyta</taxon>
        <taxon>Spermatophyta</taxon>
        <taxon>Magnoliopsida</taxon>
        <taxon>Liliopsida</taxon>
        <taxon>Poales</taxon>
        <taxon>Poaceae</taxon>
        <taxon>BOP clade</taxon>
        <taxon>Oryzoideae</taxon>
        <taxon>Oryzeae</taxon>
        <taxon>Oryzinae</taxon>
        <taxon>Oryza</taxon>
        <taxon>Oryza sativa</taxon>
    </lineage>
</organism>
<gene>
    <name type="ORF">B0103C08-B0602B01.13</name>
    <name type="ORF">OsI_016382</name>
</gene>
<name>LDL3_ORYSI</name>
<keyword id="KW-0156">Chromatin regulator</keyword>
<keyword id="KW-0274">FAD</keyword>
<keyword id="KW-0285">Flavoprotein</keyword>
<keyword id="KW-0560">Oxidoreductase</keyword>
<keyword id="KW-1185">Reference proteome</keyword>
<proteinExistence type="inferred from homology"/>
<dbReference type="EC" id="1.-.-.-"/>
<dbReference type="EMBL" id="CR855240">
    <property type="protein sequence ID" value="CAH68056.1"/>
    <property type="molecule type" value="Genomic_DNA"/>
</dbReference>
<dbReference type="EMBL" id="CM000129">
    <property type="protein sequence ID" value="EAY95149.1"/>
    <property type="molecule type" value="Genomic_DNA"/>
</dbReference>
<dbReference type="SMR" id="Q01H90"/>
<dbReference type="STRING" id="39946.Q01H90"/>
<dbReference type="EnsemblPlants" id="BGIOSGA014556-TA">
    <property type="protein sequence ID" value="BGIOSGA014556-PA"/>
    <property type="gene ID" value="BGIOSGA014556"/>
</dbReference>
<dbReference type="EnsemblPlants" id="OsIR64_04g0022010.01">
    <property type="protein sequence ID" value="OsIR64_04g0022010.01"/>
    <property type="gene ID" value="OsIR64_04g0022010"/>
</dbReference>
<dbReference type="EnsemblPlants" id="OsKYG_04g0022330.01">
    <property type="protein sequence ID" value="OsKYG_04g0022330.01"/>
    <property type="gene ID" value="OsKYG_04g0022330"/>
</dbReference>
<dbReference type="EnsemblPlants" id="OsMH63_04G023390_01">
    <property type="protein sequence ID" value="OsMH63_04G023390_01"/>
    <property type="gene ID" value="OsMH63_04G023390"/>
</dbReference>
<dbReference type="EnsemblPlants" id="OsZS97_04G023380_01">
    <property type="protein sequence ID" value="OsZS97_04G023380_01"/>
    <property type="gene ID" value="OsZS97_04G023380"/>
</dbReference>
<dbReference type="Gramene" id="BGIOSGA014556-TA">
    <property type="protein sequence ID" value="BGIOSGA014556-PA"/>
    <property type="gene ID" value="BGIOSGA014556"/>
</dbReference>
<dbReference type="Gramene" id="OsIR64_04g0022010.01">
    <property type="protein sequence ID" value="OsIR64_04g0022010.01"/>
    <property type="gene ID" value="OsIR64_04g0022010"/>
</dbReference>
<dbReference type="Gramene" id="OsKYG_04g0022330.01">
    <property type="protein sequence ID" value="OsKYG_04g0022330.01"/>
    <property type="gene ID" value="OsKYG_04g0022330"/>
</dbReference>
<dbReference type="Gramene" id="OsMH63_04G023390_01">
    <property type="protein sequence ID" value="OsMH63_04G023390_01"/>
    <property type="gene ID" value="OsMH63_04G023390"/>
</dbReference>
<dbReference type="Gramene" id="OsZS97_04G023380_01">
    <property type="protein sequence ID" value="OsZS97_04G023380_01"/>
    <property type="gene ID" value="OsZS97_04G023380"/>
</dbReference>
<dbReference type="HOGENOM" id="CLU_004498_5_0_1"/>
<dbReference type="OMA" id="IRNHLLC"/>
<dbReference type="Proteomes" id="UP000007015">
    <property type="component" value="Chromosome 4"/>
</dbReference>
<dbReference type="GO" id="GO:0050660">
    <property type="term" value="F:flavin adenine dinucleotide binding"/>
    <property type="evidence" value="ECO:0007669"/>
    <property type="project" value="UniProtKB-ARBA"/>
</dbReference>
<dbReference type="GO" id="GO:0052901">
    <property type="term" value="F:spermine oxidase activity"/>
    <property type="evidence" value="ECO:0007669"/>
    <property type="project" value="UniProtKB-ARBA"/>
</dbReference>
<dbReference type="GO" id="GO:0006325">
    <property type="term" value="P:chromatin organization"/>
    <property type="evidence" value="ECO:0007669"/>
    <property type="project" value="UniProtKB-KW"/>
</dbReference>
<dbReference type="GO" id="GO:0046208">
    <property type="term" value="P:spermine catabolic process"/>
    <property type="evidence" value="ECO:0007669"/>
    <property type="project" value="UniProtKB-ARBA"/>
</dbReference>
<dbReference type="GO" id="GO:1903602">
    <property type="term" value="P:thermospermine catabolic process"/>
    <property type="evidence" value="ECO:0007669"/>
    <property type="project" value="UniProtKB-ARBA"/>
</dbReference>
<dbReference type="FunFam" id="1.10.10.10:FF:000064">
    <property type="entry name" value="Lysine-specific histone demethylase 1A"/>
    <property type="match status" value="1"/>
</dbReference>
<dbReference type="Gene3D" id="3.90.660.10">
    <property type="match status" value="1"/>
</dbReference>
<dbReference type="Gene3D" id="3.50.50.60">
    <property type="entry name" value="FAD/NAD(P)-binding domain"/>
    <property type="match status" value="1"/>
</dbReference>
<dbReference type="Gene3D" id="1.10.10.10">
    <property type="entry name" value="Winged helix-like DNA-binding domain superfamily/Winged helix DNA-binding domain"/>
    <property type="match status" value="1"/>
</dbReference>
<dbReference type="InterPro" id="IPR002937">
    <property type="entry name" value="Amino_oxidase"/>
</dbReference>
<dbReference type="InterPro" id="IPR036188">
    <property type="entry name" value="FAD/NAD-bd_sf"/>
</dbReference>
<dbReference type="InterPro" id="IPR050281">
    <property type="entry name" value="Flavin_monoamine_oxidase"/>
</dbReference>
<dbReference type="InterPro" id="IPR009057">
    <property type="entry name" value="Homeodomain-like_sf"/>
</dbReference>
<dbReference type="InterPro" id="IPR007526">
    <property type="entry name" value="SWIRM"/>
</dbReference>
<dbReference type="InterPro" id="IPR036388">
    <property type="entry name" value="WH-like_DNA-bd_sf"/>
</dbReference>
<dbReference type="PANTHER" id="PTHR10742">
    <property type="entry name" value="FLAVIN MONOAMINE OXIDASE"/>
    <property type="match status" value="1"/>
</dbReference>
<dbReference type="PANTHER" id="PTHR10742:SF260">
    <property type="entry name" value="PROTEIN FLOWERING LOCUS D"/>
    <property type="match status" value="1"/>
</dbReference>
<dbReference type="Pfam" id="PF01593">
    <property type="entry name" value="Amino_oxidase"/>
    <property type="match status" value="1"/>
</dbReference>
<dbReference type="Pfam" id="PF04433">
    <property type="entry name" value="SWIRM"/>
    <property type="match status" value="1"/>
</dbReference>
<dbReference type="SUPFAM" id="SSF54373">
    <property type="entry name" value="FAD-linked reductases, C-terminal domain"/>
    <property type="match status" value="1"/>
</dbReference>
<dbReference type="SUPFAM" id="SSF51905">
    <property type="entry name" value="FAD/NAD(P)-binding domain"/>
    <property type="match status" value="1"/>
</dbReference>
<dbReference type="SUPFAM" id="SSF46689">
    <property type="entry name" value="Homeodomain-like"/>
    <property type="match status" value="1"/>
</dbReference>
<dbReference type="PROSITE" id="PS50934">
    <property type="entry name" value="SWIRM"/>
    <property type="match status" value="1"/>
</dbReference>
<protein>
    <recommendedName>
        <fullName>Lysine-specific histone demethylase 1 homolog 3</fullName>
        <ecNumber>1.-.-.-</ecNumber>
    </recommendedName>
    <alternativeName>
        <fullName>Flavin-containing amine oxidase domain-containing protein 3</fullName>
    </alternativeName>
    <alternativeName>
        <fullName>Protein FLOWERING LOCUS D-LIKE</fullName>
    </alternativeName>
    <alternativeName>
        <fullName>Protein LSD1-LIKE 3</fullName>
    </alternativeName>
</protein>
<sequence>MSDQPPPYTPLPLLSSFPPNPYPDQTPDPASTPTLVLPNPAFPNKRKRTGFRRKLPSGSPAAPVAVAASPSAQPPPRASAADDIIVINREPTAEAVTALTAGFPADSLTDEEIEAGVVSDVGGIEQVNYILIRNHLLTRWRETFNSWLAKESFATLIPPHCDHLLNAAYSFLVSHGHINFGVAPAIKERIPKEPTRHNTVIVVGAGLAGLAAARQLVAFGFKVVVLEGRKRCGGRVYTKKMEGGGRSAAGDLGGSVLTGTFGNPLGIVAKQLGLPMHKIRDKCPLYRPDGSPVDPEVDKKVEGTFNKLLDKSSLLRASMGDVAMDVSLGAALETLRQTDGDLSTDQEMNLFNWHLANLEYANAGLLSKLSLAFWDQDDPYDMGGDHCFLPGGNGRLVQALAENVPIVYERTVHTIRNGGDGVQVVVNGGQVYEGDMALCTVPLGVLKNGGVKFVPELPQRKLDSIKRLGFGLLNKVAMLFPHVFWSTDLDTFGHLTEDPSHRGEFFLFYSYATVAGGPLLMALVAGEAAHNFETTPPTDAVSSVLKILRGIYEPQGIEVPDPLQSVCTRWGTDSFSLGSYSHVAVGASGDDYDILAESVGDGRLFFAGEATTRRYPATMHGAFISGLREAANITLHANARAAKSKVEKGPSTNTQACAALLMDLFRQPDLEFGSFSVIFGGQASDPKSPAILKVELGGPRKKGATEGGKADQHHSNKLLFQQLQSHFNQQQQLYVYTLLSRQQAMELREVRGGDEMRLHYLCEKLGVKLVGRKGLGPGADAVIASIKAERNSSRTKTRPSKLKIGIPKSKS</sequence>
<comment type="function">
    <text evidence="1">Probable histone demethylase.</text>
</comment>
<comment type="cofactor">
    <cofactor evidence="4">
        <name>FAD</name>
        <dbReference type="ChEBI" id="CHEBI:57692"/>
    </cofactor>
</comment>
<comment type="similarity">
    <text evidence="4">Belongs to the flavin monoamine oxidase family.</text>
</comment>
<feature type="chain" id="PRO_0000342898" description="Lysine-specific histone demethylase 1 homolog 3">
    <location>
        <begin position="1"/>
        <end position="811"/>
    </location>
</feature>
<feature type="domain" description="SWIRM" evidence="2">
    <location>
        <begin position="88"/>
        <end position="189"/>
    </location>
</feature>
<feature type="region of interest" description="Disordered" evidence="3">
    <location>
        <begin position="1"/>
        <end position="79"/>
    </location>
</feature>
<feature type="region of interest" description="Disordered" evidence="3">
    <location>
        <begin position="790"/>
        <end position="811"/>
    </location>
</feature>
<feature type="compositionally biased region" description="Pro residues" evidence="3">
    <location>
        <begin position="1"/>
        <end position="10"/>
    </location>
</feature>
<feature type="compositionally biased region" description="Basic residues" evidence="3">
    <location>
        <begin position="44"/>
        <end position="55"/>
    </location>
</feature>
<feature type="compositionally biased region" description="Low complexity" evidence="3">
    <location>
        <begin position="56"/>
        <end position="71"/>
    </location>
</feature>
<feature type="binding site" evidence="1">
    <location>
        <position position="227"/>
    </location>
    <ligand>
        <name>FAD</name>
        <dbReference type="ChEBI" id="CHEBI:57692"/>
    </ligand>
</feature>
<feature type="binding site" evidence="1">
    <location>
        <position position="229"/>
    </location>
    <ligand>
        <name>FAD</name>
        <dbReference type="ChEBI" id="CHEBI:57692"/>
    </ligand>
</feature>
<feature type="binding site" evidence="1">
    <location>
        <position position="235"/>
    </location>
    <ligand>
        <name>FAD</name>
        <dbReference type="ChEBI" id="CHEBI:57692"/>
    </ligand>
</feature>
<feature type="binding site" evidence="1">
    <location>
        <position position="609"/>
    </location>
    <ligand>
        <name>FAD</name>
        <dbReference type="ChEBI" id="CHEBI:57692"/>
    </ligand>
</feature>
<evidence type="ECO:0000250" key="1"/>
<evidence type="ECO:0000255" key="2">
    <source>
        <dbReference type="PROSITE-ProRule" id="PRU00247"/>
    </source>
</evidence>
<evidence type="ECO:0000256" key="3">
    <source>
        <dbReference type="SAM" id="MobiDB-lite"/>
    </source>
</evidence>
<evidence type="ECO:0000305" key="4"/>
<accession>Q01H90</accession>
<accession>A2XWD9</accession>